<protein>
    <recommendedName>
        <fullName evidence="1">Cyclic pyranopterin monophosphate synthase</fullName>
        <ecNumber evidence="1">4.6.1.17</ecNumber>
    </recommendedName>
    <alternativeName>
        <fullName evidence="1">Molybdenum cofactor biosynthesis protein C</fullName>
    </alternativeName>
</protein>
<feature type="chain" id="PRO_0000097821" description="Cyclic pyranopterin monophosphate synthase">
    <location>
        <begin position="1"/>
        <end position="160"/>
    </location>
</feature>
<feature type="active site" evidence="1">
    <location>
        <position position="129"/>
    </location>
</feature>
<feature type="binding site" evidence="1">
    <location>
        <begin position="76"/>
        <end position="78"/>
    </location>
    <ligand>
        <name>substrate</name>
    </ligand>
</feature>
<feature type="binding site" evidence="1">
    <location>
        <begin position="114"/>
        <end position="115"/>
    </location>
    <ligand>
        <name>substrate</name>
    </ligand>
</feature>
<reference key="1">
    <citation type="journal article" date="2000" name="DNA Res.">
        <title>Complete genome structure of the nitrogen-fixing symbiotic bacterium Mesorhizobium loti.</title>
        <authorList>
            <person name="Kaneko T."/>
            <person name="Nakamura Y."/>
            <person name="Sato S."/>
            <person name="Asamizu E."/>
            <person name="Kato T."/>
            <person name="Sasamoto S."/>
            <person name="Watanabe A."/>
            <person name="Idesawa K."/>
            <person name="Ishikawa A."/>
            <person name="Kawashima K."/>
            <person name="Kimura T."/>
            <person name="Kishida Y."/>
            <person name="Kiyokawa C."/>
            <person name="Kohara M."/>
            <person name="Matsumoto M."/>
            <person name="Matsuno A."/>
            <person name="Mochizuki Y."/>
            <person name="Nakayama S."/>
            <person name="Nakazaki N."/>
            <person name="Shimpo S."/>
            <person name="Sugimoto M."/>
            <person name="Takeuchi C."/>
            <person name="Yamada M."/>
            <person name="Tabata S."/>
        </authorList>
    </citation>
    <scope>NUCLEOTIDE SEQUENCE [LARGE SCALE GENOMIC DNA]</scope>
    <source>
        <strain>LMG 29417 / CECT 9101 / MAFF 303099</strain>
    </source>
</reference>
<comment type="function">
    <text evidence="1">Catalyzes the conversion of (8S)-3',8-cyclo-7,8-dihydroguanosine 5'-triphosphate to cyclic pyranopterin monophosphate (cPMP).</text>
</comment>
<comment type="catalytic activity">
    <reaction evidence="1">
        <text>(8S)-3',8-cyclo-7,8-dihydroguanosine 5'-triphosphate = cyclic pyranopterin phosphate + diphosphate</text>
        <dbReference type="Rhea" id="RHEA:49580"/>
        <dbReference type="ChEBI" id="CHEBI:33019"/>
        <dbReference type="ChEBI" id="CHEBI:59648"/>
        <dbReference type="ChEBI" id="CHEBI:131766"/>
        <dbReference type="EC" id="4.6.1.17"/>
    </reaction>
</comment>
<comment type="pathway">
    <text evidence="1">Cofactor biosynthesis; molybdopterin biosynthesis.</text>
</comment>
<comment type="subunit">
    <text evidence="1">Homohexamer; trimer of dimers.</text>
</comment>
<comment type="similarity">
    <text evidence="1">Belongs to the MoaC family.</text>
</comment>
<dbReference type="EC" id="4.6.1.17" evidence="1"/>
<dbReference type="EMBL" id="BA000012">
    <property type="protein sequence ID" value="BAB48171.1"/>
    <property type="molecule type" value="Genomic_DNA"/>
</dbReference>
<dbReference type="RefSeq" id="WP_010909526.1">
    <property type="nucleotide sequence ID" value="NC_002678.2"/>
</dbReference>
<dbReference type="SMR" id="Q98ME2"/>
<dbReference type="KEGG" id="mlo:mlr0616"/>
<dbReference type="PATRIC" id="fig|266835.9.peg.493"/>
<dbReference type="eggNOG" id="COG0315">
    <property type="taxonomic scope" value="Bacteria"/>
</dbReference>
<dbReference type="HOGENOM" id="CLU_074693_1_1_5"/>
<dbReference type="UniPathway" id="UPA00344"/>
<dbReference type="Proteomes" id="UP000000552">
    <property type="component" value="Chromosome"/>
</dbReference>
<dbReference type="GO" id="GO:0061799">
    <property type="term" value="F:cyclic pyranopterin monophosphate synthase activity"/>
    <property type="evidence" value="ECO:0007669"/>
    <property type="project" value="UniProtKB-UniRule"/>
</dbReference>
<dbReference type="GO" id="GO:0006777">
    <property type="term" value="P:Mo-molybdopterin cofactor biosynthetic process"/>
    <property type="evidence" value="ECO:0007669"/>
    <property type="project" value="UniProtKB-UniRule"/>
</dbReference>
<dbReference type="CDD" id="cd01420">
    <property type="entry name" value="MoaC_PE"/>
    <property type="match status" value="1"/>
</dbReference>
<dbReference type="Gene3D" id="3.30.70.640">
    <property type="entry name" value="Molybdopterin cofactor biosynthesis C (MoaC) domain"/>
    <property type="match status" value="1"/>
</dbReference>
<dbReference type="HAMAP" id="MF_01224_B">
    <property type="entry name" value="MoaC_B"/>
    <property type="match status" value="1"/>
</dbReference>
<dbReference type="InterPro" id="IPR023045">
    <property type="entry name" value="MoaC"/>
</dbReference>
<dbReference type="InterPro" id="IPR047594">
    <property type="entry name" value="MoaC_bact/euk"/>
</dbReference>
<dbReference type="InterPro" id="IPR036522">
    <property type="entry name" value="MoaC_sf"/>
</dbReference>
<dbReference type="InterPro" id="IPR050105">
    <property type="entry name" value="MoCo_biosynth_MoaA/MoaC"/>
</dbReference>
<dbReference type="InterPro" id="IPR002820">
    <property type="entry name" value="Mopterin_CF_biosynth-C_dom"/>
</dbReference>
<dbReference type="NCBIfam" id="TIGR00581">
    <property type="entry name" value="moaC"/>
    <property type="match status" value="1"/>
</dbReference>
<dbReference type="NCBIfam" id="NF006870">
    <property type="entry name" value="PRK09364.1"/>
    <property type="match status" value="1"/>
</dbReference>
<dbReference type="PANTHER" id="PTHR22960:SF29">
    <property type="entry name" value="CYCLIC PYRANOPTERIN MONOPHOSPHATE SYNTHASE"/>
    <property type="match status" value="1"/>
</dbReference>
<dbReference type="PANTHER" id="PTHR22960">
    <property type="entry name" value="MOLYBDOPTERIN COFACTOR SYNTHESIS PROTEIN A"/>
    <property type="match status" value="1"/>
</dbReference>
<dbReference type="Pfam" id="PF01967">
    <property type="entry name" value="MoaC"/>
    <property type="match status" value="1"/>
</dbReference>
<dbReference type="SUPFAM" id="SSF55040">
    <property type="entry name" value="Molybdenum cofactor biosynthesis protein C, MoaC"/>
    <property type="match status" value="1"/>
</dbReference>
<accession>Q98ME2</accession>
<evidence type="ECO:0000255" key="1">
    <source>
        <dbReference type="HAMAP-Rule" id="MF_01224"/>
    </source>
</evidence>
<name>MOAC_RHILO</name>
<gene>
    <name evidence="1" type="primary">moaC</name>
    <name type="ordered locus">mlr0616</name>
</gene>
<organism>
    <name type="scientific">Mesorhizobium japonicum (strain LMG 29417 / CECT 9101 / MAFF 303099)</name>
    <name type="common">Mesorhizobium loti (strain MAFF 303099)</name>
    <dbReference type="NCBI Taxonomy" id="266835"/>
    <lineage>
        <taxon>Bacteria</taxon>
        <taxon>Pseudomonadati</taxon>
        <taxon>Pseudomonadota</taxon>
        <taxon>Alphaproteobacteria</taxon>
        <taxon>Hyphomicrobiales</taxon>
        <taxon>Phyllobacteriaceae</taxon>
        <taxon>Mesorhizobium</taxon>
    </lineage>
</organism>
<keyword id="KW-0456">Lyase</keyword>
<keyword id="KW-0501">Molybdenum cofactor biosynthesis</keyword>
<proteinExistence type="inferred from homology"/>
<sequence>MTSALTHLGAQGEANMVDVGDKEETTRTAIAEGFVSMQPETLKTILAGNAKKGDVLGTARIAGIMAAKKTHELIPLCHPLLLTKISVDIEPDHALPGLKVTALARVTGKTGVEMEALTAASVACLTIYDMAKAVDRAMLISGIRLVEKTGGKSGDYKVGA</sequence>